<keyword id="KW-0093">Biotin biosynthesis</keyword>
<keyword id="KW-0663">Pyridoxal phosphate</keyword>
<keyword id="KW-0808">Transferase</keyword>
<dbReference type="EC" id="2.3.1.47"/>
<dbReference type="EMBL" id="AE017355">
    <property type="protein sequence ID" value="AAT60740.1"/>
    <property type="molecule type" value="Genomic_DNA"/>
</dbReference>
<dbReference type="RefSeq" id="WP_001075620.1">
    <property type="nucleotide sequence ID" value="NC_005957.1"/>
</dbReference>
<dbReference type="RefSeq" id="YP_038178.1">
    <property type="nucleotide sequence ID" value="NC_005957.1"/>
</dbReference>
<dbReference type="SMR" id="Q6HE48"/>
<dbReference type="KEGG" id="btk:BT9727_3859"/>
<dbReference type="PATRIC" id="fig|281309.8.peg.4114"/>
<dbReference type="HOGENOM" id="CLU_015846_11_2_9"/>
<dbReference type="UniPathway" id="UPA00078"/>
<dbReference type="Proteomes" id="UP000001301">
    <property type="component" value="Chromosome"/>
</dbReference>
<dbReference type="GO" id="GO:0008710">
    <property type="term" value="F:8-amino-7-oxononanoate synthase activity"/>
    <property type="evidence" value="ECO:0007669"/>
    <property type="project" value="UniProtKB-EC"/>
</dbReference>
<dbReference type="GO" id="GO:0030170">
    <property type="term" value="F:pyridoxal phosphate binding"/>
    <property type="evidence" value="ECO:0007669"/>
    <property type="project" value="InterPro"/>
</dbReference>
<dbReference type="GO" id="GO:0009102">
    <property type="term" value="P:biotin biosynthetic process"/>
    <property type="evidence" value="ECO:0007669"/>
    <property type="project" value="UniProtKB-UniPathway"/>
</dbReference>
<dbReference type="CDD" id="cd06454">
    <property type="entry name" value="KBL_like"/>
    <property type="match status" value="1"/>
</dbReference>
<dbReference type="FunFam" id="3.40.640.10:FF:000006">
    <property type="entry name" value="5-aminolevulinate synthase, mitochondrial"/>
    <property type="match status" value="1"/>
</dbReference>
<dbReference type="Gene3D" id="3.90.1150.10">
    <property type="entry name" value="Aspartate Aminotransferase, domain 1"/>
    <property type="match status" value="1"/>
</dbReference>
<dbReference type="Gene3D" id="3.40.640.10">
    <property type="entry name" value="Type I PLP-dependent aspartate aminotransferase-like (Major domain)"/>
    <property type="match status" value="1"/>
</dbReference>
<dbReference type="InterPro" id="IPR001917">
    <property type="entry name" value="Aminotrans_II_pyridoxalP_BS"/>
</dbReference>
<dbReference type="InterPro" id="IPR004839">
    <property type="entry name" value="Aminotransferase_I/II_large"/>
</dbReference>
<dbReference type="InterPro" id="IPR050087">
    <property type="entry name" value="AON_synthase_class-II"/>
</dbReference>
<dbReference type="InterPro" id="IPR004723">
    <property type="entry name" value="AONS_Archaea/Proteobacteria"/>
</dbReference>
<dbReference type="InterPro" id="IPR015424">
    <property type="entry name" value="PyrdxlP-dep_Trfase"/>
</dbReference>
<dbReference type="InterPro" id="IPR015421">
    <property type="entry name" value="PyrdxlP-dep_Trfase_major"/>
</dbReference>
<dbReference type="InterPro" id="IPR015422">
    <property type="entry name" value="PyrdxlP-dep_Trfase_small"/>
</dbReference>
<dbReference type="NCBIfam" id="TIGR00858">
    <property type="entry name" value="bioF"/>
    <property type="match status" value="1"/>
</dbReference>
<dbReference type="PANTHER" id="PTHR13693:SF100">
    <property type="entry name" value="8-AMINO-7-OXONONANOATE SYNTHASE"/>
    <property type="match status" value="1"/>
</dbReference>
<dbReference type="PANTHER" id="PTHR13693">
    <property type="entry name" value="CLASS II AMINOTRANSFERASE/8-AMINO-7-OXONONANOATE SYNTHASE"/>
    <property type="match status" value="1"/>
</dbReference>
<dbReference type="Pfam" id="PF00155">
    <property type="entry name" value="Aminotran_1_2"/>
    <property type="match status" value="1"/>
</dbReference>
<dbReference type="SUPFAM" id="SSF53383">
    <property type="entry name" value="PLP-dependent transferases"/>
    <property type="match status" value="1"/>
</dbReference>
<dbReference type="PROSITE" id="PS00599">
    <property type="entry name" value="AA_TRANSFER_CLASS_2"/>
    <property type="match status" value="1"/>
</dbReference>
<organism>
    <name type="scientific">Bacillus thuringiensis subsp. konkukian (strain 97-27)</name>
    <dbReference type="NCBI Taxonomy" id="281309"/>
    <lineage>
        <taxon>Bacteria</taxon>
        <taxon>Bacillati</taxon>
        <taxon>Bacillota</taxon>
        <taxon>Bacilli</taxon>
        <taxon>Bacillales</taxon>
        <taxon>Bacillaceae</taxon>
        <taxon>Bacillus</taxon>
        <taxon>Bacillus cereus group</taxon>
    </lineage>
</organism>
<feature type="chain" id="PRO_0000380917" description="Putative 8-amino-7-oxononanoate synthase">
    <location>
        <begin position="1"/>
        <end position="395"/>
    </location>
</feature>
<feature type="binding site" evidence="1">
    <location>
        <position position="23"/>
    </location>
    <ligand>
        <name>substrate</name>
    </ligand>
</feature>
<feature type="binding site" evidence="1">
    <location>
        <begin position="110"/>
        <end position="111"/>
    </location>
    <ligand>
        <name>pyridoxal 5'-phosphate</name>
        <dbReference type="ChEBI" id="CHEBI:597326"/>
    </ligand>
</feature>
<feature type="binding site" evidence="1">
    <location>
        <position position="135"/>
    </location>
    <ligand>
        <name>substrate</name>
    </ligand>
</feature>
<feature type="binding site" evidence="1">
    <location>
        <position position="182"/>
    </location>
    <ligand>
        <name>pyridoxal 5'-phosphate</name>
        <dbReference type="ChEBI" id="CHEBI:597326"/>
    </ligand>
</feature>
<feature type="binding site" evidence="1">
    <location>
        <begin position="207"/>
        <end position="210"/>
    </location>
    <ligand>
        <name>pyridoxal 5'-phosphate</name>
        <dbReference type="ChEBI" id="CHEBI:597326"/>
    </ligand>
</feature>
<feature type="binding site" evidence="1">
    <location>
        <begin position="239"/>
        <end position="242"/>
    </location>
    <ligand>
        <name>pyridoxal 5'-phosphate</name>
        <dbReference type="ChEBI" id="CHEBI:597326"/>
    </ligand>
</feature>
<feature type="binding site" evidence="1">
    <location>
        <position position="356"/>
    </location>
    <ligand>
        <name>substrate</name>
    </ligand>
</feature>
<feature type="modified residue" description="N6-(pyridoxal phosphate)lysine" evidence="1">
    <location>
        <position position="242"/>
    </location>
</feature>
<evidence type="ECO:0000250" key="1"/>
<evidence type="ECO:0000305" key="2"/>
<comment type="function">
    <text evidence="1">Catalyzes the decarboxylative condensation of pimeloyl-[acyl-carrier protein] and L-alanine to produce 8-amino-7-oxononanoate (AON), [acyl-carrier protein], and carbon dioxide.</text>
</comment>
<comment type="catalytic activity">
    <reaction>
        <text>6-carboxyhexanoyl-[ACP] + L-alanine + H(+) = (8S)-8-amino-7-oxononanoate + holo-[ACP] + CO2</text>
        <dbReference type="Rhea" id="RHEA:42288"/>
        <dbReference type="Rhea" id="RHEA-COMP:9685"/>
        <dbReference type="Rhea" id="RHEA-COMP:9955"/>
        <dbReference type="ChEBI" id="CHEBI:15378"/>
        <dbReference type="ChEBI" id="CHEBI:16526"/>
        <dbReference type="ChEBI" id="CHEBI:57972"/>
        <dbReference type="ChEBI" id="CHEBI:64479"/>
        <dbReference type="ChEBI" id="CHEBI:78846"/>
        <dbReference type="ChEBI" id="CHEBI:149468"/>
        <dbReference type="EC" id="2.3.1.47"/>
    </reaction>
</comment>
<comment type="cofactor">
    <cofactor evidence="1">
        <name>pyridoxal 5'-phosphate</name>
        <dbReference type="ChEBI" id="CHEBI:597326"/>
    </cofactor>
</comment>
<comment type="pathway">
    <text>Cofactor biosynthesis; biotin biosynthesis.</text>
</comment>
<comment type="subunit">
    <text evidence="1">Homodimer.</text>
</comment>
<comment type="similarity">
    <text evidence="2">Belongs to the class-II pyridoxal-phosphate-dependent aminotransferase family. BioF subfamily.</text>
</comment>
<protein>
    <recommendedName>
        <fullName>Putative 8-amino-7-oxononanoate synthase</fullName>
        <shortName>AONS</shortName>
        <ecNumber>2.3.1.47</ecNumber>
    </recommendedName>
    <alternativeName>
        <fullName>7-keto-8-amino-pelargonic acid synthase</fullName>
        <shortName>7-KAP synthase</shortName>
    </alternativeName>
    <alternativeName>
        <fullName>8-amino-7-ketopelargonate synthase</fullName>
    </alternativeName>
</protein>
<name>BIOF_BACHK</name>
<reference key="1">
    <citation type="journal article" date="2006" name="J. Bacteriol.">
        <title>Pathogenomic sequence analysis of Bacillus cereus and Bacillus thuringiensis isolates closely related to Bacillus anthracis.</title>
        <authorList>
            <person name="Han C.S."/>
            <person name="Xie G."/>
            <person name="Challacombe J.F."/>
            <person name="Altherr M.R."/>
            <person name="Bhotika S.S."/>
            <person name="Bruce D."/>
            <person name="Campbell C.S."/>
            <person name="Campbell M.L."/>
            <person name="Chen J."/>
            <person name="Chertkov O."/>
            <person name="Cleland C."/>
            <person name="Dimitrijevic M."/>
            <person name="Doggett N.A."/>
            <person name="Fawcett J.J."/>
            <person name="Glavina T."/>
            <person name="Goodwin L.A."/>
            <person name="Hill K.K."/>
            <person name="Hitchcock P."/>
            <person name="Jackson P.J."/>
            <person name="Keim P."/>
            <person name="Kewalramani A.R."/>
            <person name="Longmire J."/>
            <person name="Lucas S."/>
            <person name="Malfatti S."/>
            <person name="McMurry K."/>
            <person name="Meincke L.J."/>
            <person name="Misra M."/>
            <person name="Moseman B.L."/>
            <person name="Mundt M."/>
            <person name="Munk A.C."/>
            <person name="Okinaka R.T."/>
            <person name="Parson-Quintana B."/>
            <person name="Reilly L.P."/>
            <person name="Richardson P."/>
            <person name="Robinson D.L."/>
            <person name="Rubin E."/>
            <person name="Saunders E."/>
            <person name="Tapia R."/>
            <person name="Tesmer J.G."/>
            <person name="Thayer N."/>
            <person name="Thompson L.S."/>
            <person name="Tice H."/>
            <person name="Ticknor L.O."/>
            <person name="Wills P.L."/>
            <person name="Brettin T.S."/>
            <person name="Gilna P."/>
        </authorList>
    </citation>
    <scope>NUCLEOTIDE SEQUENCE [LARGE SCALE GENOMIC DNA]</scope>
    <source>
        <strain>97-27</strain>
    </source>
</reference>
<accession>Q6HE48</accession>
<proteinExistence type="inferred from homology"/>
<gene>
    <name type="primary">bioF</name>
    <name type="ordered locus">BT9727_3859</name>
</gene>
<sequence>MNQPWRTHLQTKLKQLHEQGQYRNLHVTEQAEETWLIRDEKRMLNLASNNYLGLAGDERLKEAAIVCTRKYGTGATASRLVVGNYSLYEEVERSICNWKGTEKALVVNSGFTANVGAISSLVCRHDIVFSDKLNHASIVDGIILSGAEHKRYRHNDLNHLEALLKTASPEKRKLIVTDTVFSMDGDTAHLRELVQLKEKYGAIIIVDEAHASGIYGIGGAGLSHIEKDLAQKIDIHMGTFSKALGCYGAYLTGDAIYIEYLQNMMRSFIFTTALPPSTLGAVQKAIEIVQEDHKRRENLIANGEYFRSKLREAGFNIGNSSTHIVPIVVGSNENTLRFSKRLQEAGIAAIAIRPPTVPVHSSRIRFAVTSQHTIADLKWAIDRITHIAKEEELFV</sequence>